<organismHost>
    <name type="scientific">Aves</name>
    <dbReference type="NCBI Taxonomy" id="8782"/>
</organismHost>
<organismHost>
    <name type="scientific">Homo sapiens</name>
    <name type="common">Human</name>
    <dbReference type="NCBI Taxonomy" id="9606"/>
</organismHost>
<organismHost>
    <name type="scientific">Sus scrofa</name>
    <name type="common">Pig</name>
    <dbReference type="NCBI Taxonomy" id="9823"/>
</organismHost>
<reference key="1">
    <citation type="submission" date="2006-08" db="EMBL/GenBank/DDBJ databases">
        <title>The NIAID influenza genome sequencing project.</title>
        <authorList>
            <person name="Spiro D."/>
            <person name="Ghedin E."/>
            <person name="Sengamalay N."/>
            <person name="Halpin R."/>
            <person name="Boyne A."/>
            <person name="Zaborsky J."/>
            <person name="Feldblyum T."/>
            <person name="Subbu V."/>
            <person name="Sparenborg J."/>
            <person name="Shumway M."/>
            <person name="Sitz J."/>
            <person name="Katzel D."/>
            <person name="Koo H."/>
            <person name="Salzberg S.L."/>
            <person name="Griesemer S."/>
            <person name="St George K."/>
            <person name="Bennett R."/>
            <person name="Taylor J."/>
            <person name="Bennink J.R."/>
            <person name="Yewdell J.W."/>
            <person name="Bao Y."/>
            <person name="Bolotov P."/>
            <person name="Dernovoy D."/>
            <person name="Kiryutin B."/>
            <person name="Lipman D.J."/>
            <person name="Tatusova T."/>
        </authorList>
    </citation>
    <scope>NUCLEOTIDE SEQUENCE [GENOMIC RNA]</scope>
</reference>
<reference key="2">
    <citation type="submission" date="2006-09" db="EMBL/GenBank/DDBJ databases">
        <authorList>
            <consortium name="The NIAID Influenza Genome Sequencing Consortium"/>
        </authorList>
    </citation>
    <scope>NUCLEOTIDE SEQUENCE [GENOMIC RNA]</scope>
</reference>
<name>M2_I40A0</name>
<accession>Q0HD59</accession>
<sequence>MSLLTEVETPIRNEWECRCNDSSDPLVVAASIIGILHLILWILDRLFFKCIYRLFKHGLKRGPSTEGVPKSMREEYRKEQQSAVDADDSHFVNIELE</sequence>
<evidence type="ECO:0000255" key="1">
    <source>
        <dbReference type="HAMAP-Rule" id="MF_04069"/>
    </source>
</evidence>
<evidence type="ECO:0000256" key="2">
    <source>
        <dbReference type="SAM" id="MobiDB-lite"/>
    </source>
</evidence>
<evidence type="ECO:0007829" key="3">
    <source>
        <dbReference type="PDB" id="5TTC"/>
    </source>
</evidence>
<dbReference type="EMBL" id="CY013272">
    <property type="protein sequence ID" value="ABI20828.1"/>
    <property type="molecule type" value="Other_RNA"/>
</dbReference>
<dbReference type="PDB" id="5JOO">
    <property type="method" value="X-ray"/>
    <property type="resolution" value="1.41 A"/>
    <property type="chains" value="A=22-46"/>
</dbReference>
<dbReference type="PDB" id="5TTC">
    <property type="method" value="X-ray"/>
    <property type="resolution" value="1.40 A"/>
    <property type="chains" value="A=22-46"/>
</dbReference>
<dbReference type="PDB" id="5UM1">
    <property type="method" value="X-ray"/>
    <property type="resolution" value="1.45 A"/>
    <property type="chains" value="A=22-46"/>
</dbReference>
<dbReference type="PDBsum" id="5JOO"/>
<dbReference type="PDBsum" id="5TTC"/>
<dbReference type="PDBsum" id="5UM1"/>
<dbReference type="SMR" id="Q0HD59"/>
<dbReference type="GlyCosmos" id="Q0HD59">
    <property type="glycosylation" value="1 site, No reported glycans"/>
</dbReference>
<dbReference type="Proteomes" id="UP000156248">
    <property type="component" value="Genome"/>
</dbReference>
<dbReference type="GO" id="GO:0020002">
    <property type="term" value="C:host cell plasma membrane"/>
    <property type="evidence" value="ECO:0007669"/>
    <property type="project" value="UniProtKB-SubCell"/>
</dbReference>
<dbReference type="GO" id="GO:0016020">
    <property type="term" value="C:membrane"/>
    <property type="evidence" value="ECO:0007669"/>
    <property type="project" value="UniProtKB-UniRule"/>
</dbReference>
<dbReference type="GO" id="GO:0055036">
    <property type="term" value="C:virion membrane"/>
    <property type="evidence" value="ECO:0007669"/>
    <property type="project" value="UniProtKB-SubCell"/>
</dbReference>
<dbReference type="GO" id="GO:0005216">
    <property type="term" value="F:monoatomic ion channel activity"/>
    <property type="evidence" value="ECO:0007669"/>
    <property type="project" value="UniProtKB-UniRule"/>
</dbReference>
<dbReference type="GO" id="GO:0015078">
    <property type="term" value="F:proton transmembrane transporter activity"/>
    <property type="evidence" value="ECO:0007669"/>
    <property type="project" value="UniProtKB-UniRule"/>
</dbReference>
<dbReference type="GO" id="GO:0051259">
    <property type="term" value="P:protein complex oligomerization"/>
    <property type="evidence" value="ECO:0007669"/>
    <property type="project" value="UniProtKB-UniRule"/>
</dbReference>
<dbReference type="GO" id="GO:0044694">
    <property type="term" value="P:symbiont genome entry into host cell via pore formation in plasma membrane"/>
    <property type="evidence" value="ECO:0007669"/>
    <property type="project" value="UniProtKB-UniRule"/>
</dbReference>
<dbReference type="GO" id="GO:0140321">
    <property type="term" value="P:symbiont-mediated suppression of host autophagy"/>
    <property type="evidence" value="ECO:0007669"/>
    <property type="project" value="UniProtKB-KW"/>
</dbReference>
<dbReference type="Gene3D" id="6.10.250.1640">
    <property type="match status" value="1"/>
</dbReference>
<dbReference type="HAMAP" id="MF_04069">
    <property type="entry name" value="INFV_M2"/>
    <property type="match status" value="1"/>
</dbReference>
<dbReference type="InterPro" id="IPR002089">
    <property type="entry name" value="Flu_M2"/>
</dbReference>
<dbReference type="Pfam" id="PF00599">
    <property type="entry name" value="Flu_M2"/>
    <property type="match status" value="1"/>
</dbReference>
<organism>
    <name type="scientific">Influenza A virus (strain A/Hickox/1940 H1N1)</name>
    <dbReference type="NCBI Taxonomy" id="383543"/>
    <lineage>
        <taxon>Viruses</taxon>
        <taxon>Riboviria</taxon>
        <taxon>Orthornavirae</taxon>
        <taxon>Negarnaviricota</taxon>
        <taxon>Polyploviricotina</taxon>
        <taxon>Insthoviricetes</taxon>
        <taxon>Articulavirales</taxon>
        <taxon>Orthomyxoviridae</taxon>
        <taxon>Alphainfluenzavirus</taxon>
        <taxon>Alphainfluenzavirus influenzae</taxon>
        <taxon>Influenza A virus</taxon>
    </lineage>
</organism>
<comment type="function">
    <text evidence="1">Forms a proton-selective ion channel that is necessary for the efficient release of the viral genome during virus entry. After attaching to the cell surface, the virion enters the cell by endocytosis. Acidification of the endosome triggers M2 ion channel activity. The influx of protons into virion interior is believed to disrupt interactions between the viral ribonucleoprotein (RNP), matrix protein 1 (M1), and lipid bilayers, thereby freeing the viral genome from interaction with viral proteins and enabling RNA segments to migrate to the host cell nucleus, where influenza virus RNA transcription and replication occur. Also plays a role in viral proteins secretory pathway. Elevates the intravesicular pH of normally acidic compartments, such as trans-Golgi network, preventing newly formed hemagglutinin from premature switching to the fusion-active conformation.</text>
</comment>
<comment type="activity regulation">
    <text>The M2 protein from most influenza A strains is inhibited by amantadine and rimantadine, resulting in viral uncoating incapacity. Emergence of amantadine-resistant variants is usually rapid.</text>
</comment>
<comment type="subunit">
    <text evidence="1">Homotetramer; composed of two disulfide-linked dimers held together by non-covalent interactions. May interact with matrix protein 1.</text>
</comment>
<comment type="subcellular location">
    <subcellularLocation>
        <location evidence="1">Virion membrane</location>
    </subcellularLocation>
    <subcellularLocation>
        <location evidence="1">Host apical cell membrane</location>
        <topology evidence="1">Single-pass type III membrane protein</topology>
    </subcellularLocation>
    <text evidence="1">Abundantly expressed at the apical plasma membrane in infected polarized epithelial cells, in close proximity to budding and assembled virions. Minor component of virions (only 16-20 molecules/virion).</text>
</comment>
<comment type="alternative products">
    <event type="alternative splicing"/>
    <isoform>
        <id>Q0HD59-1</id>
        <name>M2</name>
        <sequence type="displayed"/>
    </isoform>
    <isoform>
        <id>Q0HD58-1</id>
        <name>M1</name>
        <sequence type="external"/>
    </isoform>
    <text>Only the first 9 residues are shared by the 2 isoforms.</text>
</comment>
<comment type="domain">
    <text evidence="1">Cytoplasmic tail plays an important role in virion assembly and morphogenesis.</text>
</comment>
<comment type="miscellaneous">
    <text evidence="1">When the channel is activated, one or more imidazole moieties of His-37 probably become bi-protonated.</text>
</comment>
<comment type="similarity">
    <text evidence="1">Belongs to the influenza viruses matrix protein M2 family.</text>
</comment>
<protein>
    <recommendedName>
        <fullName evidence="1">Matrix protein 2</fullName>
    </recommendedName>
    <alternativeName>
        <fullName evidence="1">Proton channel protein M2</fullName>
    </alternativeName>
</protein>
<feature type="chain" id="PRO_0000372920" description="Matrix protein 2">
    <location>
        <begin position="1"/>
        <end position="97"/>
    </location>
</feature>
<feature type="topological domain" description="Virion surface" evidence="1">
    <location>
        <begin position="1"/>
        <end position="22"/>
    </location>
</feature>
<feature type="transmembrane region" description="Helical; Signal-anchor for type III membrane protein" evidence="1">
    <location>
        <begin position="23"/>
        <end position="43"/>
    </location>
</feature>
<feature type="topological domain" description="Intravirion" evidence="1">
    <location>
        <begin position="44"/>
        <end position="97"/>
    </location>
</feature>
<feature type="region of interest" description="Disordered" evidence="2">
    <location>
        <begin position="60"/>
        <end position="85"/>
    </location>
</feature>
<feature type="compositionally biased region" description="Basic and acidic residues" evidence="2">
    <location>
        <begin position="71"/>
        <end position="80"/>
    </location>
</feature>
<feature type="site" description="Essential for channel activity, possibly by being protonated during channel activation, and by forming the channel gate and the selective filter" evidence="1">
    <location>
        <position position="37"/>
    </location>
</feature>
<feature type="site" description="Seems to be involved in pH gating" evidence="1">
    <location>
        <position position="41"/>
    </location>
</feature>
<feature type="modified residue" description="Phosphoserine; by host" evidence="1">
    <location>
        <position position="64"/>
    </location>
</feature>
<feature type="modified residue" description="Phosphoserine; by host" evidence="1">
    <location>
        <position position="82"/>
    </location>
</feature>
<feature type="lipid moiety-binding region" description="S-palmitoyl cysteine; by host" evidence="1">
    <location>
        <position position="50"/>
    </location>
</feature>
<feature type="glycosylation site" description="N-linked (GlcNAc...) asparagine; by host" evidence="1">
    <location>
        <position position="20"/>
    </location>
</feature>
<feature type="disulfide bond" description="Interchain (with C-17)" evidence="1">
    <location>
        <position position="17"/>
    </location>
</feature>
<feature type="disulfide bond" description="Interchain (with C-19)" evidence="1">
    <location>
        <position position="19"/>
    </location>
</feature>
<feature type="helix" evidence="3">
    <location>
        <begin position="25"/>
        <end position="45"/>
    </location>
</feature>
<proteinExistence type="evidence at protein level"/>
<gene>
    <name evidence="1" type="primary">M</name>
    <name type="synonym">M2</name>
</gene>
<keyword id="KW-0002">3D-structure</keyword>
<keyword id="KW-0025">Alternative splicing</keyword>
<keyword id="KW-1015">Disulfide bond</keyword>
<keyword id="KW-0325">Glycoprotein</keyword>
<keyword id="KW-1032">Host cell membrane</keyword>
<keyword id="KW-1043">Host membrane</keyword>
<keyword id="KW-0945">Host-virus interaction</keyword>
<keyword id="KW-0375">Hydrogen ion transport</keyword>
<keyword id="KW-1083">Inhibition of host autophagy by virus</keyword>
<keyword id="KW-0407">Ion channel</keyword>
<keyword id="KW-0406">Ion transport</keyword>
<keyword id="KW-0449">Lipoprotein</keyword>
<keyword id="KW-0472">Membrane</keyword>
<keyword id="KW-0564">Palmitate</keyword>
<keyword id="KW-0597">Phosphoprotein</keyword>
<keyword id="KW-0735">Signal-anchor</keyword>
<keyword id="KW-0812">Transmembrane</keyword>
<keyword id="KW-1133">Transmembrane helix</keyword>
<keyword id="KW-0813">Transport</keyword>
<keyword id="KW-1182">Viral ion channel</keyword>
<keyword id="KW-0946">Virion</keyword>